<keyword id="KW-0025">Alternative splicing</keyword>
<keyword id="KW-1003">Cell membrane</keyword>
<keyword id="KW-0472">Membrane</keyword>
<keyword id="KW-0597">Phosphoprotein</keyword>
<keyword id="KW-1267">Proteomics identification</keyword>
<keyword id="KW-1185">Reference proteome</keyword>
<keyword id="KW-0677">Repeat</keyword>
<keyword id="KW-0853">WD repeat</keyword>
<sequence length="815" mass="88984">MAGGHCGSFPAAAAGSGEIVQLNVGGTRFSTSRQTLMWIPDSFFSSLLSGRISTLRDETGAIFIDRDPAAFAPILNFLRTKELDLRGVSINVLRHEAEFYGITPLVRRLLLCEELERSSCGSVLFHGYLPPPGIPSRKINNTVRSADSRNGLNSTEGEARGNGTQPVLSGTGEETVRLGFPVDPRKVLIVAGHHNWIVAAYAHFAVCYRIKESSGWQQVFTSPYLDWTIERVALNAKVVGGPHGDKDKMVAVASESSIILWSVQDGGSGSEIGVFSLGVPVDALFFIGNQLVATSHTGKVGVWNAVTQHWQVQDVVPITSYDTAGSFLLLGCNNGSIYYIDMQKFPLRMKDNDLLVTELYHDPSNDAITALSVYLTPKTSVSGNWIEIAYGTSSGAVRVIVQHPETVGSGPQLFQTFTVHRSPVTKIMLSEKHLVSVCADNNHVRTWTVTRFRGMISTQPGSTPLASFKILSLEETESHGSYSSGNDIGPFGERDDQQVFIQKVVPITNKLFVRLSSTGKRICEIQAVDCTTISSFTVRECEGSSRMGSRPRRYLFTGHTNGSIQMWDLTTAMDMVNKSEDKDVGGPTEEELLKLLDQCDLSTSRCATPNISPATSVVQHSHLRESNSSLQLQHHDTTHEAATYGSMRPYRESPLLARARRTESFHSYRDFQTINLNRNVERAVPENGNLGPIQAEVKGATGECNISERKSPGVEIKSLRELDSGLEVHKIAEGFSESKKRSSEDENENKIEFRKKGGFEGGGFLGRKKVPYLASSPSTSDGGTDSPGTASPSPTKTTPSPRHKKSDSSGQEYSL</sequence>
<protein>
    <recommendedName>
        <fullName>BTB/POZ domain-containing protein KCTD3</fullName>
    </recommendedName>
    <alternativeName>
        <fullName>Renal carcinoma antigen NY-REN-45</fullName>
    </alternativeName>
</protein>
<evidence type="ECO:0000250" key="1">
    <source>
        <dbReference type="UniProtKB" id="Q8BFX3"/>
    </source>
</evidence>
<evidence type="ECO:0000255" key="2">
    <source>
        <dbReference type="PROSITE-ProRule" id="PRU00037"/>
    </source>
</evidence>
<evidence type="ECO:0000256" key="3">
    <source>
        <dbReference type="SAM" id="MobiDB-lite"/>
    </source>
</evidence>
<evidence type="ECO:0000269" key="4">
    <source>
    </source>
</evidence>
<evidence type="ECO:0000269" key="5">
    <source>
    </source>
</evidence>
<evidence type="ECO:0000303" key="6">
    <source>
    </source>
</evidence>
<evidence type="ECO:0000305" key="7"/>
<evidence type="ECO:0007744" key="8">
    <source>
    </source>
</evidence>
<reference key="1">
    <citation type="journal article" date="1999" name="Int. J. Cancer">
        <title>Antigens recognized by autologous antibody in patients with renal-cell carcinoma.</title>
        <authorList>
            <person name="Scanlan M.J."/>
            <person name="Gordan J.D."/>
            <person name="Williamson B."/>
            <person name="Stockert E."/>
            <person name="Bander N.H."/>
            <person name="Jongeneel C.V."/>
            <person name="Gure A.O."/>
            <person name="Jaeger D."/>
            <person name="Jaeger E."/>
            <person name="Knuth A."/>
            <person name="Chen Y.-T."/>
            <person name="Old L.J."/>
        </authorList>
    </citation>
    <scope>NUCLEOTIDE SEQUENCE [MRNA] (ISOFORM 1)</scope>
    <scope>TISSUE SPECIFICITY</scope>
</reference>
<reference key="2">
    <citation type="journal article" date="2006" name="Nature">
        <title>The DNA sequence and biological annotation of human chromosome 1.</title>
        <authorList>
            <person name="Gregory S.G."/>
            <person name="Barlow K.F."/>
            <person name="McLay K.E."/>
            <person name="Kaul R."/>
            <person name="Swarbreck D."/>
            <person name="Dunham A."/>
            <person name="Scott C.E."/>
            <person name="Howe K.L."/>
            <person name="Woodfine K."/>
            <person name="Spencer C.C.A."/>
            <person name="Jones M.C."/>
            <person name="Gillson C."/>
            <person name="Searle S."/>
            <person name="Zhou Y."/>
            <person name="Kokocinski F."/>
            <person name="McDonald L."/>
            <person name="Evans R."/>
            <person name="Phillips K."/>
            <person name="Atkinson A."/>
            <person name="Cooper R."/>
            <person name="Jones C."/>
            <person name="Hall R.E."/>
            <person name="Andrews T.D."/>
            <person name="Lloyd C."/>
            <person name="Ainscough R."/>
            <person name="Almeida J.P."/>
            <person name="Ambrose K.D."/>
            <person name="Anderson F."/>
            <person name="Andrew R.W."/>
            <person name="Ashwell R.I.S."/>
            <person name="Aubin K."/>
            <person name="Babbage A.K."/>
            <person name="Bagguley C.L."/>
            <person name="Bailey J."/>
            <person name="Beasley H."/>
            <person name="Bethel G."/>
            <person name="Bird C.P."/>
            <person name="Bray-Allen S."/>
            <person name="Brown J.Y."/>
            <person name="Brown A.J."/>
            <person name="Buckley D."/>
            <person name="Burton J."/>
            <person name="Bye J."/>
            <person name="Carder C."/>
            <person name="Chapman J.C."/>
            <person name="Clark S.Y."/>
            <person name="Clarke G."/>
            <person name="Clee C."/>
            <person name="Cobley V."/>
            <person name="Collier R.E."/>
            <person name="Corby N."/>
            <person name="Coville G.J."/>
            <person name="Davies J."/>
            <person name="Deadman R."/>
            <person name="Dunn M."/>
            <person name="Earthrowl M."/>
            <person name="Ellington A.G."/>
            <person name="Errington H."/>
            <person name="Frankish A."/>
            <person name="Frankland J."/>
            <person name="French L."/>
            <person name="Garner P."/>
            <person name="Garnett J."/>
            <person name="Gay L."/>
            <person name="Ghori M.R.J."/>
            <person name="Gibson R."/>
            <person name="Gilby L.M."/>
            <person name="Gillett W."/>
            <person name="Glithero R.J."/>
            <person name="Grafham D.V."/>
            <person name="Griffiths C."/>
            <person name="Griffiths-Jones S."/>
            <person name="Grocock R."/>
            <person name="Hammond S."/>
            <person name="Harrison E.S.I."/>
            <person name="Hart E."/>
            <person name="Haugen E."/>
            <person name="Heath P.D."/>
            <person name="Holmes S."/>
            <person name="Holt K."/>
            <person name="Howden P.J."/>
            <person name="Hunt A.R."/>
            <person name="Hunt S.E."/>
            <person name="Hunter G."/>
            <person name="Isherwood J."/>
            <person name="James R."/>
            <person name="Johnson C."/>
            <person name="Johnson D."/>
            <person name="Joy A."/>
            <person name="Kay M."/>
            <person name="Kershaw J.K."/>
            <person name="Kibukawa M."/>
            <person name="Kimberley A.M."/>
            <person name="King A."/>
            <person name="Knights A.J."/>
            <person name="Lad H."/>
            <person name="Laird G."/>
            <person name="Lawlor S."/>
            <person name="Leongamornlert D.A."/>
            <person name="Lloyd D.M."/>
            <person name="Loveland J."/>
            <person name="Lovell J."/>
            <person name="Lush M.J."/>
            <person name="Lyne R."/>
            <person name="Martin S."/>
            <person name="Mashreghi-Mohammadi M."/>
            <person name="Matthews L."/>
            <person name="Matthews N.S.W."/>
            <person name="McLaren S."/>
            <person name="Milne S."/>
            <person name="Mistry S."/>
            <person name="Moore M.J.F."/>
            <person name="Nickerson T."/>
            <person name="O'Dell C.N."/>
            <person name="Oliver K."/>
            <person name="Palmeiri A."/>
            <person name="Palmer S.A."/>
            <person name="Parker A."/>
            <person name="Patel D."/>
            <person name="Pearce A.V."/>
            <person name="Peck A.I."/>
            <person name="Pelan S."/>
            <person name="Phelps K."/>
            <person name="Phillimore B.J."/>
            <person name="Plumb R."/>
            <person name="Rajan J."/>
            <person name="Raymond C."/>
            <person name="Rouse G."/>
            <person name="Saenphimmachak C."/>
            <person name="Sehra H.K."/>
            <person name="Sheridan E."/>
            <person name="Shownkeen R."/>
            <person name="Sims S."/>
            <person name="Skuce C.D."/>
            <person name="Smith M."/>
            <person name="Steward C."/>
            <person name="Subramanian S."/>
            <person name="Sycamore N."/>
            <person name="Tracey A."/>
            <person name="Tromans A."/>
            <person name="Van Helmond Z."/>
            <person name="Wall M."/>
            <person name="Wallis J.M."/>
            <person name="White S."/>
            <person name="Whitehead S.L."/>
            <person name="Wilkinson J.E."/>
            <person name="Willey D.L."/>
            <person name="Williams H."/>
            <person name="Wilming L."/>
            <person name="Wray P.W."/>
            <person name="Wu Z."/>
            <person name="Coulson A."/>
            <person name="Vaudin M."/>
            <person name="Sulston J.E."/>
            <person name="Durbin R.M."/>
            <person name="Hubbard T."/>
            <person name="Wooster R."/>
            <person name="Dunham I."/>
            <person name="Carter N.P."/>
            <person name="McVean G."/>
            <person name="Ross M.T."/>
            <person name="Harrow J."/>
            <person name="Olson M.V."/>
            <person name="Beck S."/>
            <person name="Rogers J."/>
            <person name="Bentley D.R."/>
        </authorList>
    </citation>
    <scope>NUCLEOTIDE SEQUENCE [LARGE SCALE GENOMIC DNA]</scope>
</reference>
<reference key="3">
    <citation type="submission" date="2005-09" db="EMBL/GenBank/DDBJ databases">
        <authorList>
            <person name="Mural R.J."/>
            <person name="Istrail S."/>
            <person name="Sutton G.G."/>
            <person name="Florea L."/>
            <person name="Halpern A.L."/>
            <person name="Mobarry C.M."/>
            <person name="Lippert R."/>
            <person name="Walenz B."/>
            <person name="Shatkay H."/>
            <person name="Dew I."/>
            <person name="Miller J.R."/>
            <person name="Flanigan M.J."/>
            <person name="Edwards N.J."/>
            <person name="Bolanos R."/>
            <person name="Fasulo D."/>
            <person name="Halldorsson B.V."/>
            <person name="Hannenhalli S."/>
            <person name="Turner R."/>
            <person name="Yooseph S."/>
            <person name="Lu F."/>
            <person name="Nusskern D.R."/>
            <person name="Shue B.C."/>
            <person name="Zheng X.H."/>
            <person name="Zhong F."/>
            <person name="Delcher A.L."/>
            <person name="Huson D.H."/>
            <person name="Kravitz S.A."/>
            <person name="Mouchard L."/>
            <person name="Reinert K."/>
            <person name="Remington K.A."/>
            <person name="Clark A.G."/>
            <person name="Waterman M.S."/>
            <person name="Eichler E.E."/>
            <person name="Adams M.D."/>
            <person name="Hunkapiller M.W."/>
            <person name="Myers E.W."/>
            <person name="Venter J.C."/>
        </authorList>
    </citation>
    <scope>NUCLEOTIDE SEQUENCE [LARGE SCALE GENOMIC DNA]</scope>
</reference>
<reference key="4">
    <citation type="journal article" date="2004" name="Genome Res.">
        <title>The status, quality, and expansion of the NIH full-length cDNA project: the Mammalian Gene Collection (MGC).</title>
        <authorList>
            <consortium name="The MGC Project Team"/>
        </authorList>
    </citation>
    <scope>NUCLEOTIDE SEQUENCE [LARGE SCALE MRNA] (ISOFORMS 1; 2 AND 3)</scope>
    <scope>VARIANT VAL-9</scope>
    <source>
        <tissue>Brain</tissue>
        <tissue>Lymph</tissue>
        <tissue>Placenta</tissue>
    </source>
</reference>
<reference key="5">
    <citation type="journal article" date="2007" name="BMC Genomics">
        <title>The full-ORF clone resource of the German cDNA consortium.</title>
        <authorList>
            <person name="Bechtel S."/>
            <person name="Rosenfelder H."/>
            <person name="Duda A."/>
            <person name="Schmidt C.P."/>
            <person name="Ernst U."/>
            <person name="Wellenreuther R."/>
            <person name="Mehrle A."/>
            <person name="Schuster C."/>
            <person name="Bahr A."/>
            <person name="Bloecker H."/>
            <person name="Heubner D."/>
            <person name="Hoerlein A."/>
            <person name="Michel G."/>
            <person name="Wedler H."/>
            <person name="Koehrer K."/>
            <person name="Ottenwaelder B."/>
            <person name="Poustka A."/>
            <person name="Wiemann S."/>
            <person name="Schupp I."/>
        </authorList>
    </citation>
    <scope>NUCLEOTIDE SEQUENCE [LARGE SCALE MRNA] OF 158-815</scope>
    <source>
        <tissue>Brain</tissue>
        <tissue>Testis</tissue>
    </source>
</reference>
<reference key="6">
    <citation type="journal article" date="2008" name="Proc. Natl. Acad. Sci. U.S.A.">
        <title>A quantitative atlas of mitotic phosphorylation.</title>
        <authorList>
            <person name="Dephoure N."/>
            <person name="Zhou C."/>
            <person name="Villen J."/>
            <person name="Beausoleil S.A."/>
            <person name="Bakalarski C.E."/>
            <person name="Elledge S.J."/>
            <person name="Gygi S.P."/>
        </authorList>
    </citation>
    <scope>IDENTIFICATION BY MASS SPECTROMETRY [LARGE SCALE ANALYSIS]</scope>
    <source>
        <tissue>Cervix carcinoma</tissue>
    </source>
</reference>
<reference key="7">
    <citation type="journal article" date="2010" name="Sci. Signal.">
        <title>Quantitative phosphoproteomics reveals widespread full phosphorylation site occupancy during mitosis.</title>
        <authorList>
            <person name="Olsen J.V."/>
            <person name="Vermeulen M."/>
            <person name="Santamaria A."/>
            <person name="Kumar C."/>
            <person name="Miller M.L."/>
            <person name="Jensen L.J."/>
            <person name="Gnad F."/>
            <person name="Cox J."/>
            <person name="Jensen T.S."/>
            <person name="Nigg E.A."/>
            <person name="Brunak S."/>
            <person name="Mann M."/>
        </authorList>
    </citation>
    <scope>IDENTIFICATION BY MASS SPECTROMETRY [LARGE SCALE ANALYSIS]</scope>
    <source>
        <tissue>Cervix carcinoma</tissue>
    </source>
</reference>
<reference key="8">
    <citation type="journal article" date="2013" name="J. Proteome Res.">
        <title>Toward a comprehensive characterization of a human cancer cell phosphoproteome.</title>
        <authorList>
            <person name="Zhou H."/>
            <person name="Di Palma S."/>
            <person name="Preisinger C."/>
            <person name="Peng M."/>
            <person name="Polat A.N."/>
            <person name="Heck A.J."/>
            <person name="Mohammed S."/>
        </authorList>
    </citation>
    <scope>PHOSPHORYLATION [LARGE SCALE ANALYSIS] AT SER-604; SER-664; SER-711 AND SER-793</scope>
    <scope>IDENTIFICATION BY MASS SPECTROMETRY [LARGE SCALE ANALYSIS]</scope>
    <source>
        <tissue>Cervix carcinoma</tissue>
        <tissue>Erythroleukemia</tissue>
    </source>
</reference>
<reference key="9">
    <citation type="journal article" date="2014" name="J. Proteomics">
        <title>An enzyme assisted RP-RPLC approach for in-depth analysis of human liver phosphoproteome.</title>
        <authorList>
            <person name="Bian Y."/>
            <person name="Song C."/>
            <person name="Cheng K."/>
            <person name="Dong M."/>
            <person name="Wang F."/>
            <person name="Huang J."/>
            <person name="Sun D."/>
            <person name="Wang L."/>
            <person name="Ye M."/>
            <person name="Zou H."/>
        </authorList>
    </citation>
    <scope>IDENTIFICATION BY MASS SPECTROMETRY [LARGE SCALE ANALYSIS]</scope>
    <source>
        <tissue>Liver</tissue>
    </source>
</reference>
<feature type="chain" id="PRO_0000247839" description="BTB/POZ domain-containing protein KCTD3">
    <location>
        <begin position="1"/>
        <end position="815"/>
    </location>
</feature>
<feature type="domain" description="BTB" evidence="2">
    <location>
        <begin position="18"/>
        <end position="87"/>
    </location>
</feature>
<feature type="repeat" description="WD 1">
    <location>
        <begin position="174"/>
        <end position="218"/>
    </location>
</feature>
<feature type="repeat" description="WD 2">
    <location>
        <begin position="224"/>
        <end position="263"/>
    </location>
</feature>
<feature type="repeat" description="WD 3">
    <location>
        <begin position="270"/>
        <end position="305"/>
    </location>
</feature>
<feature type="repeat" description="WD 4">
    <location>
        <begin position="310"/>
        <end position="342"/>
    </location>
</feature>
<feature type="repeat" description="WD 5">
    <location>
        <begin position="354"/>
        <end position="404"/>
    </location>
</feature>
<feature type="repeat" description="WD 6">
    <location>
        <begin position="412"/>
        <end position="449"/>
    </location>
</feature>
<feature type="repeat" description="WD 7">
    <location>
        <begin position="457"/>
        <end position="504"/>
    </location>
</feature>
<feature type="repeat" description="WD 8">
    <location>
        <begin position="510"/>
        <end position="569"/>
    </location>
</feature>
<feature type="region of interest" description="Disordered" evidence="3">
    <location>
        <begin position="139"/>
        <end position="170"/>
    </location>
</feature>
<feature type="region of interest" description="Interaction with HCN3" evidence="1">
    <location>
        <begin position="512"/>
        <end position="815"/>
    </location>
</feature>
<feature type="region of interest" description="Disordered" evidence="3">
    <location>
        <begin position="736"/>
        <end position="815"/>
    </location>
</feature>
<feature type="compositionally biased region" description="Polar residues" evidence="3">
    <location>
        <begin position="139"/>
        <end position="168"/>
    </location>
</feature>
<feature type="compositionally biased region" description="Basic and acidic residues" evidence="3">
    <location>
        <begin position="736"/>
        <end position="758"/>
    </location>
</feature>
<feature type="compositionally biased region" description="Low complexity" evidence="3">
    <location>
        <begin position="774"/>
        <end position="800"/>
    </location>
</feature>
<feature type="modified residue" description="Phosphoserine" evidence="8">
    <location>
        <position position="604"/>
    </location>
</feature>
<feature type="modified residue" description="Phosphoserine" evidence="8">
    <location>
        <position position="664"/>
    </location>
</feature>
<feature type="modified residue" description="Phosphoserine" evidence="8">
    <location>
        <position position="711"/>
    </location>
</feature>
<feature type="modified residue" description="Phosphoserine" evidence="8">
    <location>
        <position position="793"/>
    </location>
</feature>
<feature type="splice variant" id="VSP_020068" description="In isoform 3." evidence="6">
    <location>
        <begin position="1"/>
        <end position="646"/>
    </location>
</feature>
<feature type="splice variant" id="VSP_020069" description="In isoform 2." evidence="6">
    <location>
        <begin position="583"/>
        <end position="584"/>
    </location>
</feature>
<feature type="sequence variant" id="VAR_027156" description="In dbSNP:rs2275768." evidence="5">
    <original>F</original>
    <variation>V</variation>
    <location>
        <position position="9"/>
    </location>
</feature>
<feature type="sequence conflict" description="In Ref. 1; AAD42876." evidence="7" ref="1">
    <original>C</original>
    <variation>W</variation>
    <location>
        <position position="207"/>
    </location>
</feature>
<feature type="sequence conflict" description="In Ref. 5; CAD38743." evidence="7" ref="5">
    <original>K</original>
    <variation>I</variation>
    <location>
        <position position="503"/>
    </location>
</feature>
<feature type="sequence conflict" description="In Ref. 5; CAD38743." evidence="7" ref="5">
    <original>S</original>
    <variation>P</variation>
    <location>
        <position position="742"/>
    </location>
</feature>
<feature type="sequence conflict" description="In Ref. 5; CAD38743." evidence="7" ref="5">
    <original>H</original>
    <variation>HK</variation>
    <location>
        <position position="803"/>
    </location>
</feature>
<name>KCTD3_HUMAN</name>
<organism>
    <name type="scientific">Homo sapiens</name>
    <name type="common">Human</name>
    <dbReference type="NCBI Taxonomy" id="9606"/>
    <lineage>
        <taxon>Eukaryota</taxon>
        <taxon>Metazoa</taxon>
        <taxon>Chordata</taxon>
        <taxon>Craniata</taxon>
        <taxon>Vertebrata</taxon>
        <taxon>Euteleostomi</taxon>
        <taxon>Mammalia</taxon>
        <taxon>Eutheria</taxon>
        <taxon>Euarchontoglires</taxon>
        <taxon>Primates</taxon>
        <taxon>Haplorrhini</taxon>
        <taxon>Catarrhini</taxon>
        <taxon>Hominidae</taxon>
        <taxon>Homo</taxon>
    </lineage>
</organism>
<gene>
    <name type="primary">KCTD3</name>
</gene>
<comment type="function">
    <text evidence="1">Accessory subunit of potassium/sodium hyperpolarization-activated cyclic nucleotide-gated channel 3 (HCN3) up-regulating its cell-surface expression and current density without affecting its voltage dependence and kinetics.</text>
</comment>
<comment type="subunit">
    <text evidence="1">Interacts with HCN3.</text>
</comment>
<comment type="subcellular location">
    <subcellularLocation>
        <location evidence="1">Cell membrane</location>
    </subcellularLocation>
</comment>
<comment type="alternative products">
    <event type="alternative splicing"/>
    <isoform>
        <id>Q9Y597-1</id>
        <name>1</name>
        <sequence type="displayed"/>
    </isoform>
    <isoform>
        <id>Q9Y597-2</id>
        <name>2</name>
        <sequence type="described" ref="VSP_020069"/>
    </isoform>
    <isoform>
        <id>Q9Y597-3</id>
        <name>3</name>
        <sequence type="described" ref="VSP_020068"/>
    </isoform>
</comment>
<comment type="tissue specificity">
    <text evidence="4">Broadly expressed in normal tissues.</text>
</comment>
<comment type="miscellaneous">
    <text>Reacts with sera from 5-25 per cent of cancer patients but not with sera from normal donors. Seventy per cent of renal cancer patients have antibodies against one or a panel of these antigens.</text>
</comment>
<comment type="similarity">
    <text evidence="7">Belongs to the KCTD3 family.</text>
</comment>
<comment type="sequence caution" evidence="7">
    <conflict type="miscellaneous discrepancy">
        <sequence resource="EMBL-CDS" id="AAH13868"/>
    </conflict>
    <text>Contaminating sequence. Potential poly-A sequence.</text>
</comment>
<dbReference type="EMBL" id="AF155110">
    <property type="protein sequence ID" value="AAD42876.1"/>
    <property type="molecule type" value="mRNA"/>
</dbReference>
<dbReference type="EMBL" id="AC092799">
    <property type="status" value="NOT_ANNOTATED_CDS"/>
    <property type="molecule type" value="Genomic_DNA"/>
</dbReference>
<dbReference type="EMBL" id="AL365315">
    <property type="status" value="NOT_ANNOTATED_CDS"/>
    <property type="molecule type" value="Genomic_DNA"/>
</dbReference>
<dbReference type="EMBL" id="CH471100">
    <property type="protein sequence ID" value="EAW93345.1"/>
    <property type="molecule type" value="Genomic_DNA"/>
</dbReference>
<dbReference type="EMBL" id="BC013868">
    <property type="protein sequence ID" value="AAH13868.1"/>
    <property type="status" value="ALT_SEQ"/>
    <property type="molecule type" value="mRNA"/>
</dbReference>
<dbReference type="EMBL" id="BC037896">
    <property type="protein sequence ID" value="AAH37896.1"/>
    <property type="molecule type" value="mRNA"/>
</dbReference>
<dbReference type="EMBL" id="BC094879">
    <property type="protein sequence ID" value="AAH94879.1"/>
    <property type="molecule type" value="mRNA"/>
</dbReference>
<dbReference type="EMBL" id="BC117188">
    <property type="protein sequence ID" value="AAI17189.1"/>
    <property type="molecule type" value="mRNA"/>
</dbReference>
<dbReference type="EMBL" id="BC126173">
    <property type="protein sequence ID" value="AAI26174.1"/>
    <property type="molecule type" value="mRNA"/>
</dbReference>
<dbReference type="EMBL" id="AL833887">
    <property type="protein sequence ID" value="CAD38743.2"/>
    <property type="molecule type" value="mRNA"/>
</dbReference>
<dbReference type="EMBL" id="AL834389">
    <property type="protein sequence ID" value="CAD39051.1"/>
    <property type="molecule type" value="mRNA"/>
</dbReference>
<dbReference type="CCDS" id="CCDS1515.1">
    <molecule id="Q9Y597-1"/>
</dbReference>
<dbReference type="RefSeq" id="NP_001306223.1">
    <molecule id="Q9Y597-2"/>
    <property type="nucleotide sequence ID" value="NM_001319294.2"/>
</dbReference>
<dbReference type="RefSeq" id="NP_001306224.1">
    <property type="nucleotide sequence ID" value="NM_001319295.1"/>
</dbReference>
<dbReference type="RefSeq" id="NP_057205.2">
    <molecule id="Q9Y597-1"/>
    <property type="nucleotide sequence ID" value="NM_016121.4"/>
</dbReference>
<dbReference type="SMR" id="Q9Y597"/>
<dbReference type="BioGRID" id="119320">
    <property type="interactions" value="176"/>
</dbReference>
<dbReference type="FunCoup" id="Q9Y597">
    <property type="interactions" value="1590"/>
</dbReference>
<dbReference type="IntAct" id="Q9Y597">
    <property type="interactions" value="54"/>
</dbReference>
<dbReference type="MINT" id="Q9Y597"/>
<dbReference type="STRING" id="9606.ENSP00000259154"/>
<dbReference type="GlyGen" id="Q9Y597">
    <property type="glycosylation" value="2 sites, 1 O-linked glycan (1 site)"/>
</dbReference>
<dbReference type="iPTMnet" id="Q9Y597"/>
<dbReference type="PhosphoSitePlus" id="Q9Y597"/>
<dbReference type="BioMuta" id="KCTD3"/>
<dbReference type="DMDM" id="112823993"/>
<dbReference type="jPOST" id="Q9Y597"/>
<dbReference type="MassIVE" id="Q9Y597"/>
<dbReference type="PaxDb" id="9606-ENSP00000259154"/>
<dbReference type="PeptideAtlas" id="Q9Y597"/>
<dbReference type="ProteomicsDB" id="86320">
    <molecule id="Q9Y597-1"/>
</dbReference>
<dbReference type="ProteomicsDB" id="86321">
    <molecule id="Q9Y597-2"/>
</dbReference>
<dbReference type="ProteomicsDB" id="86322">
    <molecule id="Q9Y597-3"/>
</dbReference>
<dbReference type="Pumba" id="Q9Y597"/>
<dbReference type="Antibodypedia" id="2795">
    <property type="antibodies" value="116 antibodies from 22 providers"/>
</dbReference>
<dbReference type="DNASU" id="51133"/>
<dbReference type="Ensembl" id="ENST00000259154.9">
    <molecule id="Q9Y597-1"/>
    <property type="protein sequence ID" value="ENSP00000259154.2"/>
    <property type="gene ID" value="ENSG00000136636.13"/>
</dbReference>
<dbReference type="GeneID" id="51133"/>
<dbReference type="KEGG" id="hsa:51133"/>
<dbReference type="MANE-Select" id="ENST00000259154.9">
    <property type="protein sequence ID" value="ENSP00000259154.2"/>
    <property type="RefSeq nucleotide sequence ID" value="NM_016121.5"/>
    <property type="RefSeq protein sequence ID" value="NP_057205.2"/>
</dbReference>
<dbReference type="UCSC" id="uc001hks.5">
    <molecule id="Q9Y597-1"/>
    <property type="organism name" value="human"/>
</dbReference>
<dbReference type="AGR" id="HGNC:21305"/>
<dbReference type="CTD" id="51133"/>
<dbReference type="DisGeNET" id="51133"/>
<dbReference type="GeneCards" id="KCTD3"/>
<dbReference type="HGNC" id="HGNC:21305">
    <property type="gene designation" value="KCTD3"/>
</dbReference>
<dbReference type="HPA" id="ENSG00000136636">
    <property type="expression patterns" value="Low tissue specificity"/>
</dbReference>
<dbReference type="MalaCards" id="KCTD3"/>
<dbReference type="MIM" id="613272">
    <property type="type" value="gene"/>
</dbReference>
<dbReference type="neXtProt" id="NX_Q9Y597"/>
<dbReference type="OpenTargets" id="ENSG00000136636"/>
<dbReference type="PharmGKB" id="PA134945859"/>
<dbReference type="VEuPathDB" id="HostDB:ENSG00000136636"/>
<dbReference type="eggNOG" id="KOG2714">
    <property type="taxonomic scope" value="Eukaryota"/>
</dbReference>
<dbReference type="GeneTree" id="ENSGT00940000153881"/>
<dbReference type="HOGENOM" id="CLU_012214_1_0_1"/>
<dbReference type="InParanoid" id="Q9Y597"/>
<dbReference type="OMA" id="YFMHSAS"/>
<dbReference type="OrthoDB" id="6077599at2759"/>
<dbReference type="PAN-GO" id="Q9Y597">
    <property type="GO annotations" value="0 GO annotations based on evolutionary models"/>
</dbReference>
<dbReference type="PhylomeDB" id="Q9Y597"/>
<dbReference type="TreeFam" id="TF313754"/>
<dbReference type="PathwayCommons" id="Q9Y597"/>
<dbReference type="Reactome" id="R-HSA-9013148">
    <property type="pathway name" value="CDC42 GTPase cycle"/>
</dbReference>
<dbReference type="SignaLink" id="Q9Y597"/>
<dbReference type="BioGRID-ORCS" id="51133">
    <property type="hits" value="13 hits in 1156 CRISPR screens"/>
</dbReference>
<dbReference type="ChiTaRS" id="KCTD3">
    <property type="organism name" value="human"/>
</dbReference>
<dbReference type="GenomeRNAi" id="51133"/>
<dbReference type="Pharos" id="Q9Y597">
    <property type="development level" value="Tdark"/>
</dbReference>
<dbReference type="PRO" id="PR:Q9Y597"/>
<dbReference type="Proteomes" id="UP000005640">
    <property type="component" value="Chromosome 1"/>
</dbReference>
<dbReference type="RNAct" id="Q9Y597">
    <property type="molecule type" value="protein"/>
</dbReference>
<dbReference type="Bgee" id="ENSG00000136636">
    <property type="expression patterns" value="Expressed in jejunal mucosa and 195 other cell types or tissues"/>
</dbReference>
<dbReference type="ExpressionAtlas" id="Q9Y597">
    <property type="expression patterns" value="baseline and differential"/>
</dbReference>
<dbReference type="GO" id="GO:0005886">
    <property type="term" value="C:plasma membrane"/>
    <property type="evidence" value="ECO:0000250"/>
    <property type="project" value="UniProtKB"/>
</dbReference>
<dbReference type="GO" id="GO:0051260">
    <property type="term" value="P:protein homooligomerization"/>
    <property type="evidence" value="ECO:0007669"/>
    <property type="project" value="InterPro"/>
</dbReference>
<dbReference type="CDD" id="cd18393">
    <property type="entry name" value="BTB_POZ_SHKBP1"/>
    <property type="match status" value="1"/>
</dbReference>
<dbReference type="FunFam" id="2.130.10.10:FF:000205">
    <property type="entry name" value="BTB/POZ domain-containing protein KCTD3 isoform X1"/>
    <property type="match status" value="1"/>
</dbReference>
<dbReference type="FunFam" id="3.30.710.10:FF:000038">
    <property type="entry name" value="BTB/POZ domain-containing protein KCTD3 isoform X1"/>
    <property type="match status" value="1"/>
</dbReference>
<dbReference type="Gene3D" id="3.30.710.10">
    <property type="entry name" value="Potassium Channel Kv1.1, Chain A"/>
    <property type="match status" value="1"/>
</dbReference>
<dbReference type="Gene3D" id="2.130.10.10">
    <property type="entry name" value="YVTN repeat-like/Quinoprotein amine dehydrogenase"/>
    <property type="match status" value="2"/>
</dbReference>
<dbReference type="InterPro" id="IPR000210">
    <property type="entry name" value="BTB/POZ_dom"/>
</dbReference>
<dbReference type="InterPro" id="IPR047876">
    <property type="entry name" value="SHKBP1/KCTD3"/>
</dbReference>
<dbReference type="InterPro" id="IPR047825">
    <property type="entry name" value="SHKBP1_KCTD3_BTB_POZ"/>
</dbReference>
<dbReference type="InterPro" id="IPR011333">
    <property type="entry name" value="SKP1/BTB/POZ_sf"/>
</dbReference>
<dbReference type="InterPro" id="IPR003131">
    <property type="entry name" value="T1-type_BTB"/>
</dbReference>
<dbReference type="InterPro" id="IPR015943">
    <property type="entry name" value="WD40/YVTN_repeat-like_dom_sf"/>
</dbReference>
<dbReference type="InterPro" id="IPR036322">
    <property type="entry name" value="WD40_repeat_dom_sf"/>
</dbReference>
<dbReference type="InterPro" id="IPR001680">
    <property type="entry name" value="WD40_rpt"/>
</dbReference>
<dbReference type="PANTHER" id="PTHR15859:SF2">
    <property type="entry name" value="BTB_POZ DOMAIN-CONTAINING PROTEIN KCTD3"/>
    <property type="match status" value="1"/>
</dbReference>
<dbReference type="PANTHER" id="PTHR15859">
    <property type="entry name" value="SETA BINDING PROTEIN 1"/>
    <property type="match status" value="1"/>
</dbReference>
<dbReference type="Pfam" id="PF02214">
    <property type="entry name" value="BTB_2"/>
    <property type="match status" value="1"/>
</dbReference>
<dbReference type="SMART" id="SM00225">
    <property type="entry name" value="BTB"/>
    <property type="match status" value="1"/>
</dbReference>
<dbReference type="SMART" id="SM00320">
    <property type="entry name" value="WD40"/>
    <property type="match status" value="3"/>
</dbReference>
<dbReference type="SUPFAM" id="SSF54695">
    <property type="entry name" value="POZ domain"/>
    <property type="match status" value="1"/>
</dbReference>
<dbReference type="SUPFAM" id="SSF50978">
    <property type="entry name" value="WD40 repeat-like"/>
    <property type="match status" value="1"/>
</dbReference>
<dbReference type="PROSITE" id="PS50097">
    <property type="entry name" value="BTB"/>
    <property type="match status" value="1"/>
</dbReference>
<dbReference type="PROSITE" id="PS00678">
    <property type="entry name" value="WD_REPEATS_1"/>
    <property type="match status" value="1"/>
</dbReference>
<accession>Q9Y597</accession>
<accession>A0AV15</accession>
<accession>D3DTA6</accession>
<accession>Q49AG7</accession>
<accession>Q504Q9</accession>
<accession>Q6PJN6</accession>
<accession>Q8ND58</accession>
<accession>Q8NDJ0</accession>
<accession>Q8WX16</accession>
<proteinExistence type="evidence at protein level"/>